<proteinExistence type="evidence at protein level"/>
<protein>
    <recommendedName>
        <fullName>Protein cutoff</fullName>
    </recommendedName>
</protein>
<feature type="chain" id="PRO_0000249826" description="Protein cutoff">
    <location>
        <begin position="1"/>
        <end position="384"/>
    </location>
</feature>
<dbReference type="EMBL" id="AE013599">
    <property type="protein sequence ID" value="AAF58610.1"/>
    <property type="molecule type" value="Genomic_DNA"/>
</dbReference>
<dbReference type="EMBL" id="BT024325">
    <property type="protein sequence ID" value="ABC86387.1"/>
    <property type="status" value="ALT_INIT"/>
    <property type="molecule type" value="mRNA"/>
</dbReference>
<dbReference type="RefSeq" id="NP_610709.1">
    <property type="nucleotide sequence ID" value="NM_136865.3"/>
</dbReference>
<dbReference type="SMR" id="Q9V629"/>
<dbReference type="BioGRID" id="62054">
    <property type="interactions" value="7"/>
</dbReference>
<dbReference type="ComplexPortal" id="CPX-3213">
    <property type="entry name" value="Rhino-Deadlock-Cutoff complex"/>
</dbReference>
<dbReference type="FunCoup" id="Q9V629">
    <property type="interactions" value="49"/>
</dbReference>
<dbReference type="IntAct" id="Q9V629">
    <property type="interactions" value="4"/>
</dbReference>
<dbReference type="MINT" id="Q9V629"/>
<dbReference type="STRING" id="7227.FBpp0087141"/>
<dbReference type="PaxDb" id="7227-FBpp0087141"/>
<dbReference type="DNASU" id="36269"/>
<dbReference type="EnsemblMetazoa" id="FBtr0088034">
    <property type="protein sequence ID" value="FBpp0087141"/>
    <property type="gene ID" value="FBgn0260932"/>
</dbReference>
<dbReference type="GeneID" id="36269"/>
<dbReference type="KEGG" id="dme:Dmel_CG13190"/>
<dbReference type="UCSC" id="CG13190-RA">
    <property type="organism name" value="d. melanogaster"/>
</dbReference>
<dbReference type="AGR" id="FB:FBgn0260932"/>
<dbReference type="CTD" id="36269"/>
<dbReference type="FlyBase" id="FBgn0260932">
    <property type="gene designation" value="cuff"/>
</dbReference>
<dbReference type="VEuPathDB" id="VectorBase:FBgn0260932"/>
<dbReference type="eggNOG" id="KOG1982">
    <property type="taxonomic scope" value="Eukaryota"/>
</dbReference>
<dbReference type="GeneTree" id="ENSGT00390000006425"/>
<dbReference type="HOGENOM" id="CLU_024877_1_1_1"/>
<dbReference type="InParanoid" id="Q9V629"/>
<dbReference type="OMA" id="RNTMYIC"/>
<dbReference type="OrthoDB" id="5853397at2759"/>
<dbReference type="PhylomeDB" id="Q9V629"/>
<dbReference type="SignaLink" id="Q9V629"/>
<dbReference type="BioGRID-ORCS" id="36269">
    <property type="hits" value="0 hits in 1 CRISPR screen"/>
</dbReference>
<dbReference type="GenomeRNAi" id="36269"/>
<dbReference type="PRO" id="PR:Q9V629"/>
<dbReference type="Proteomes" id="UP000000803">
    <property type="component" value="Chromosome 2R"/>
</dbReference>
<dbReference type="Bgee" id="FBgn0260932">
    <property type="expression patterns" value="Expressed in enterocyte of posterior adult midgut epithelium (Drosophila) in digestive tract and 13 other cell types or tissues"/>
</dbReference>
<dbReference type="GO" id="GO:0005694">
    <property type="term" value="C:chromosome"/>
    <property type="evidence" value="ECO:0007669"/>
    <property type="project" value="UniProtKB-SubCell"/>
</dbReference>
<dbReference type="GO" id="GO:0005737">
    <property type="term" value="C:cytoplasm"/>
    <property type="evidence" value="ECO:0000314"/>
    <property type="project" value="UniProtKB"/>
</dbReference>
<dbReference type="GO" id="GO:0005829">
    <property type="term" value="C:cytosol"/>
    <property type="evidence" value="ECO:0000318"/>
    <property type="project" value="GO_Central"/>
</dbReference>
<dbReference type="GO" id="GO:0005634">
    <property type="term" value="C:nucleus"/>
    <property type="evidence" value="ECO:0000314"/>
    <property type="project" value="FlyBase"/>
</dbReference>
<dbReference type="GO" id="GO:0048471">
    <property type="term" value="C:perinuclear region of cytoplasm"/>
    <property type="evidence" value="ECO:0000314"/>
    <property type="project" value="FlyBase"/>
</dbReference>
<dbReference type="GO" id="GO:1990469">
    <property type="term" value="C:Rhino-Deadlock-Cutoff Complex"/>
    <property type="evidence" value="ECO:0000303"/>
    <property type="project" value="ComplexPortal"/>
</dbReference>
<dbReference type="GO" id="GO:1990470">
    <property type="term" value="F:piRNA cluster binding"/>
    <property type="evidence" value="ECO:0000314"/>
    <property type="project" value="FlyBase"/>
</dbReference>
<dbReference type="GO" id="GO:0009953">
    <property type="term" value="P:dorsal/ventral pattern formation"/>
    <property type="evidence" value="ECO:0000315"/>
    <property type="project" value="FlyBase"/>
</dbReference>
<dbReference type="GO" id="GO:0030727">
    <property type="term" value="P:germarium-derived female germ-line cyst formation"/>
    <property type="evidence" value="ECO:0000315"/>
    <property type="project" value="FlyBase"/>
</dbReference>
<dbReference type="GO" id="GO:0110155">
    <property type="term" value="P:NAD-cap decapping"/>
    <property type="evidence" value="ECO:0000318"/>
    <property type="project" value="GO_Central"/>
</dbReference>
<dbReference type="GO" id="GO:0000956">
    <property type="term" value="P:nuclear-transcribed mRNA catabolic process"/>
    <property type="evidence" value="ECO:0000318"/>
    <property type="project" value="GO_Central"/>
</dbReference>
<dbReference type="GO" id="GO:0030717">
    <property type="term" value="P:oocyte karyosome formation"/>
    <property type="evidence" value="ECO:0000315"/>
    <property type="project" value="FlyBase"/>
</dbReference>
<dbReference type="GO" id="GO:0048477">
    <property type="term" value="P:oogenesis"/>
    <property type="evidence" value="ECO:0007001"/>
    <property type="project" value="FlyBase"/>
</dbReference>
<dbReference type="GO" id="GO:0030723">
    <property type="term" value="P:ovarian fusome organization"/>
    <property type="evidence" value="ECO:0000315"/>
    <property type="project" value="FlyBase"/>
</dbReference>
<dbReference type="GO" id="GO:0030719">
    <property type="term" value="P:P granule organization"/>
    <property type="evidence" value="ECO:0000315"/>
    <property type="project" value="FlyBase"/>
</dbReference>
<dbReference type="GO" id="GO:0034587">
    <property type="term" value="P:piRNA processing"/>
    <property type="evidence" value="ECO:0000303"/>
    <property type="project" value="ComplexPortal"/>
</dbReference>
<dbReference type="GO" id="GO:0140543">
    <property type="term" value="P:positive regulation of piRNA transcription"/>
    <property type="evidence" value="ECO:0000315"/>
    <property type="project" value="UniProtKB"/>
</dbReference>
<dbReference type="GO" id="GO:1905382">
    <property type="term" value="P:positive regulation of snRNA transcription by RNA polymerase II"/>
    <property type="evidence" value="ECO:0000315"/>
    <property type="project" value="FlyBase"/>
</dbReference>
<dbReference type="GO" id="GO:0030422">
    <property type="term" value="P:siRNA processing"/>
    <property type="evidence" value="ECO:0000315"/>
    <property type="project" value="UniProtKB"/>
</dbReference>
<dbReference type="GO" id="GO:0001015">
    <property type="term" value="P:snoRNA transcription by RNA polymerase II"/>
    <property type="evidence" value="ECO:0000315"/>
    <property type="project" value="FlyBase"/>
</dbReference>
<dbReference type="InterPro" id="IPR013961">
    <property type="entry name" value="RAI1"/>
</dbReference>
<dbReference type="InterPro" id="IPR039039">
    <property type="entry name" value="RAI1-like_fam"/>
</dbReference>
<dbReference type="PANTHER" id="PTHR12395:SF9">
    <property type="entry name" value="DECAPPING AND EXORIBONUCLEASE PROTEIN"/>
    <property type="match status" value="1"/>
</dbReference>
<dbReference type="PANTHER" id="PTHR12395">
    <property type="entry name" value="DOM-3 RELATED"/>
    <property type="match status" value="1"/>
</dbReference>
<dbReference type="Pfam" id="PF08652">
    <property type="entry name" value="RAI1"/>
    <property type="match status" value="1"/>
</dbReference>
<name>CUFF_DROME</name>
<evidence type="ECO:0000269" key="1">
    <source>
    </source>
</evidence>
<evidence type="ECO:0000269" key="2">
    <source>
    </source>
</evidence>
<evidence type="ECO:0000269" key="3">
    <source>
    </source>
</evidence>
<evidence type="ECO:0000269" key="4">
    <source>
    </source>
</evidence>
<evidence type="ECO:0000269" key="5">
    <source>
    </source>
</evidence>
<evidence type="ECO:0000305" key="6"/>
<accession>Q9V629</accession>
<accession>Q29QR5</accession>
<comment type="function">
    <text evidence="1 2 3 4 5">Involved in the piRNA pathway in germline tissues (PubMed:17363252, PubMed:21952049). Part of the Rhino-Deadlock-Cutoff (RDC) complex that stimulates piRNA biogenesis from chromatin regions corresponding to dual-strand, but not single-stranded, piRNA clusters (PubMed:24906153, PubMed:25085419, PubMed:27292797). Promotes transcription of long piRNA precursors by preventing termination at canonical poly(A) sites (PubMed:27292797). As part of the RDC complex, is recruited to chromatin enriched in histone modification H3K9me3 and might contribute to complex interaction by binding nascent transcript nucleic acid chains (PubMed:24906153, PubMed:25085419, PubMed:27292797). Associates with chromatin upon exposure to homologous piRNA (PubMed:27292797). Suppresses cleavage at canonical poly(A) sites by blocking recruitment of the cleavage and polyadenylation specificity factor (CPSF) complex and prevents transcriptional termination by RNA polymerase II, facilitating transcriptional read-through (PubMed:27292797). As part of the RDC complex, involved in suppression of splicing (PubMed:27292797). Catalytically inactive, lacking 5'-3' exonuclease and pyrophosphohydrolase activities (PubMed:27292797). Stabilizes uncapped piRNA precursors in the nucleus, probably by sequestering or blocking the exonuclease activity of Rat1 (PubMed:27292797). May also be involved in siRNA biogenesis from dual-strand piRNA clusters (PubMed:25085419).</text>
</comment>
<comment type="subunit">
    <text evidence="2 3 4 5">Component of the Rhino-Deadlock-Cutoff (RDC) complex, composed of rhi/rhino, del/deadlock and cuff/cutoff (PubMed:24906153). Interacts with rhi/rhino; this interaction is indirect and is mediated by del/deadlock (PubMed:21952049, PubMed:24906153, PubMed:25085419). Interacts with del/deadlock (via C-terminal); this interaction is direct (PubMed:24906153). Interacts with Rat1 (PubMed:27292797).</text>
</comment>
<comment type="interaction">
    <interactant intactId="EBI-185996">
        <id>Q9V629</id>
    </interactant>
    <interactant intactId="EBI-151790">
        <id>Q9VIF5</id>
        <label>del</label>
    </interactant>
    <organismsDiffer>false</organismsDiffer>
    <experiments>4</experiments>
</comment>
<comment type="subcellular location">
    <subcellularLocation>
        <location>Cytoplasm</location>
    </subcellularLocation>
    <subcellularLocation>
        <location evidence="3 4 5">Nucleus</location>
    </subcellularLocation>
    <subcellularLocation>
        <location evidence="3 4">Chromosome</location>
    </subcellularLocation>
    <text evidence="3 4">Localized to perinuclear puncta in the nurse cells of younger egg chambers. Accumulates at centromeric/pericentromeric positions in germ-cell nuclei and strongly colocalizes with the major heterochromatic domains. Localizes to nuclear foci corresponding to dual-strand, but not single-strand, piRNA clusters (PubMed:24906153, PubMed:25085419). All components of the Rhino-Deadlock-Cutoff (RDC) Complex associate with these nuclear foci and are required for their formation (PubMed:24906153).</text>
</comment>
<comment type="disruption phenotype">
    <text evidence="1 5">Females exhibit severely reduced fecundity. Defects in germline cyst development and result in ventralized eggs as a result of reduced Grk expression. Increase in the transcript levels of two retrotransposable elements, Het-A and Tart. RNAi-mediated knockdown in germline cells leads to decresed production of dual-strand cluster derived piRNAs (PubMed:27292797).</text>
</comment>
<comment type="similarity">
    <text evidence="6">Belongs to the DXO/Dom3Z family.</text>
</comment>
<comment type="caution">
    <text evidence="6">In contrast to other members of the family that display ribonuclease activity, lacks the conserved catalytic sites that bind the divalent metal cations. Ribonuclease activity is therefore unsure.</text>
</comment>
<comment type="sequence caution" evidence="6">
    <conflict type="erroneous initiation">
        <sequence resource="EMBL-CDS" id="ABC86387"/>
    </conflict>
    <text>Extended N-terminus.</text>
</comment>
<gene>
    <name type="primary">cuff</name>
    <name type="ORF">CG13190</name>
</gene>
<reference key="1">
    <citation type="journal article" date="2000" name="Science">
        <title>The genome sequence of Drosophila melanogaster.</title>
        <authorList>
            <person name="Adams M.D."/>
            <person name="Celniker S.E."/>
            <person name="Holt R.A."/>
            <person name="Evans C.A."/>
            <person name="Gocayne J.D."/>
            <person name="Amanatides P.G."/>
            <person name="Scherer S.E."/>
            <person name="Li P.W."/>
            <person name="Hoskins R.A."/>
            <person name="Galle R.F."/>
            <person name="George R.A."/>
            <person name="Lewis S.E."/>
            <person name="Richards S."/>
            <person name="Ashburner M."/>
            <person name="Henderson S.N."/>
            <person name="Sutton G.G."/>
            <person name="Wortman J.R."/>
            <person name="Yandell M.D."/>
            <person name="Zhang Q."/>
            <person name="Chen L.X."/>
            <person name="Brandon R.C."/>
            <person name="Rogers Y.-H.C."/>
            <person name="Blazej R.G."/>
            <person name="Champe M."/>
            <person name="Pfeiffer B.D."/>
            <person name="Wan K.H."/>
            <person name="Doyle C."/>
            <person name="Baxter E.G."/>
            <person name="Helt G."/>
            <person name="Nelson C.R."/>
            <person name="Miklos G.L.G."/>
            <person name="Abril J.F."/>
            <person name="Agbayani A."/>
            <person name="An H.-J."/>
            <person name="Andrews-Pfannkoch C."/>
            <person name="Baldwin D."/>
            <person name="Ballew R.M."/>
            <person name="Basu A."/>
            <person name="Baxendale J."/>
            <person name="Bayraktaroglu L."/>
            <person name="Beasley E.M."/>
            <person name="Beeson K.Y."/>
            <person name="Benos P.V."/>
            <person name="Berman B.P."/>
            <person name="Bhandari D."/>
            <person name="Bolshakov S."/>
            <person name="Borkova D."/>
            <person name="Botchan M.R."/>
            <person name="Bouck J."/>
            <person name="Brokstein P."/>
            <person name="Brottier P."/>
            <person name="Burtis K.C."/>
            <person name="Busam D.A."/>
            <person name="Butler H."/>
            <person name="Cadieu E."/>
            <person name="Center A."/>
            <person name="Chandra I."/>
            <person name="Cherry J.M."/>
            <person name="Cawley S."/>
            <person name="Dahlke C."/>
            <person name="Davenport L.B."/>
            <person name="Davies P."/>
            <person name="de Pablos B."/>
            <person name="Delcher A."/>
            <person name="Deng Z."/>
            <person name="Mays A.D."/>
            <person name="Dew I."/>
            <person name="Dietz S.M."/>
            <person name="Dodson K."/>
            <person name="Doup L.E."/>
            <person name="Downes M."/>
            <person name="Dugan-Rocha S."/>
            <person name="Dunkov B.C."/>
            <person name="Dunn P."/>
            <person name="Durbin K.J."/>
            <person name="Evangelista C.C."/>
            <person name="Ferraz C."/>
            <person name="Ferriera S."/>
            <person name="Fleischmann W."/>
            <person name="Fosler C."/>
            <person name="Gabrielian A.E."/>
            <person name="Garg N.S."/>
            <person name="Gelbart W.M."/>
            <person name="Glasser K."/>
            <person name="Glodek A."/>
            <person name="Gong F."/>
            <person name="Gorrell J.H."/>
            <person name="Gu Z."/>
            <person name="Guan P."/>
            <person name="Harris M."/>
            <person name="Harris N.L."/>
            <person name="Harvey D.A."/>
            <person name="Heiman T.J."/>
            <person name="Hernandez J.R."/>
            <person name="Houck J."/>
            <person name="Hostin D."/>
            <person name="Houston K.A."/>
            <person name="Howland T.J."/>
            <person name="Wei M.-H."/>
            <person name="Ibegwam C."/>
            <person name="Jalali M."/>
            <person name="Kalush F."/>
            <person name="Karpen G.H."/>
            <person name="Ke Z."/>
            <person name="Kennison J.A."/>
            <person name="Ketchum K.A."/>
            <person name="Kimmel B.E."/>
            <person name="Kodira C.D."/>
            <person name="Kraft C.L."/>
            <person name="Kravitz S."/>
            <person name="Kulp D."/>
            <person name="Lai Z."/>
            <person name="Lasko P."/>
            <person name="Lei Y."/>
            <person name="Levitsky A.A."/>
            <person name="Li J.H."/>
            <person name="Li Z."/>
            <person name="Liang Y."/>
            <person name="Lin X."/>
            <person name="Liu X."/>
            <person name="Mattei B."/>
            <person name="McIntosh T.C."/>
            <person name="McLeod M.P."/>
            <person name="McPherson D."/>
            <person name="Merkulov G."/>
            <person name="Milshina N.V."/>
            <person name="Mobarry C."/>
            <person name="Morris J."/>
            <person name="Moshrefi A."/>
            <person name="Mount S.M."/>
            <person name="Moy M."/>
            <person name="Murphy B."/>
            <person name="Murphy L."/>
            <person name="Muzny D.M."/>
            <person name="Nelson D.L."/>
            <person name="Nelson D.R."/>
            <person name="Nelson K.A."/>
            <person name="Nixon K."/>
            <person name="Nusskern D.R."/>
            <person name="Pacleb J.M."/>
            <person name="Palazzolo M."/>
            <person name="Pittman G.S."/>
            <person name="Pan S."/>
            <person name="Pollard J."/>
            <person name="Puri V."/>
            <person name="Reese M.G."/>
            <person name="Reinert K."/>
            <person name="Remington K."/>
            <person name="Saunders R.D.C."/>
            <person name="Scheeler F."/>
            <person name="Shen H."/>
            <person name="Shue B.C."/>
            <person name="Siden-Kiamos I."/>
            <person name="Simpson M."/>
            <person name="Skupski M.P."/>
            <person name="Smith T.J."/>
            <person name="Spier E."/>
            <person name="Spradling A.C."/>
            <person name="Stapleton M."/>
            <person name="Strong R."/>
            <person name="Sun E."/>
            <person name="Svirskas R."/>
            <person name="Tector C."/>
            <person name="Turner R."/>
            <person name="Venter E."/>
            <person name="Wang A.H."/>
            <person name="Wang X."/>
            <person name="Wang Z.-Y."/>
            <person name="Wassarman D.A."/>
            <person name="Weinstock G.M."/>
            <person name="Weissenbach J."/>
            <person name="Williams S.M."/>
            <person name="Woodage T."/>
            <person name="Worley K.C."/>
            <person name="Wu D."/>
            <person name="Yang S."/>
            <person name="Yao Q.A."/>
            <person name="Ye J."/>
            <person name="Yeh R.-F."/>
            <person name="Zaveri J.S."/>
            <person name="Zhan M."/>
            <person name="Zhang G."/>
            <person name="Zhao Q."/>
            <person name="Zheng L."/>
            <person name="Zheng X.H."/>
            <person name="Zhong F.N."/>
            <person name="Zhong W."/>
            <person name="Zhou X."/>
            <person name="Zhu S.C."/>
            <person name="Zhu X."/>
            <person name="Smith H.O."/>
            <person name="Gibbs R.A."/>
            <person name="Myers E.W."/>
            <person name="Rubin G.M."/>
            <person name="Venter J.C."/>
        </authorList>
    </citation>
    <scope>NUCLEOTIDE SEQUENCE [LARGE SCALE GENOMIC DNA]</scope>
    <source>
        <strain>Berkeley</strain>
    </source>
</reference>
<reference key="2">
    <citation type="journal article" date="2002" name="Genome Biol.">
        <title>Annotation of the Drosophila melanogaster euchromatic genome: a systematic review.</title>
        <authorList>
            <person name="Misra S."/>
            <person name="Crosby M.A."/>
            <person name="Mungall C.J."/>
            <person name="Matthews B.B."/>
            <person name="Campbell K.S."/>
            <person name="Hradecky P."/>
            <person name="Huang Y."/>
            <person name="Kaminker J.S."/>
            <person name="Millburn G.H."/>
            <person name="Prochnik S.E."/>
            <person name="Smith C.D."/>
            <person name="Tupy J.L."/>
            <person name="Whitfield E.J."/>
            <person name="Bayraktaroglu L."/>
            <person name="Berman B.P."/>
            <person name="Bettencourt B.R."/>
            <person name="Celniker S.E."/>
            <person name="de Grey A.D.N.J."/>
            <person name="Drysdale R.A."/>
            <person name="Harris N.L."/>
            <person name="Richter J."/>
            <person name="Russo S."/>
            <person name="Schroeder A.J."/>
            <person name="Shu S.Q."/>
            <person name="Stapleton M."/>
            <person name="Yamada C."/>
            <person name="Ashburner M."/>
            <person name="Gelbart W.M."/>
            <person name="Rubin G.M."/>
            <person name="Lewis S.E."/>
        </authorList>
    </citation>
    <scope>GENOME REANNOTATION</scope>
    <source>
        <strain>Berkeley</strain>
    </source>
</reference>
<reference key="3">
    <citation type="submission" date="2006-01" db="EMBL/GenBank/DDBJ databases">
        <authorList>
            <person name="Stapleton M."/>
            <person name="Carlson J.W."/>
            <person name="Chavez C."/>
            <person name="Frise E."/>
            <person name="George R.A."/>
            <person name="Pacleb J.M."/>
            <person name="Park S."/>
            <person name="Wan K.H."/>
            <person name="Yu C."/>
            <person name="Celniker S.E."/>
        </authorList>
    </citation>
    <scope>NUCLEOTIDE SEQUENCE [LARGE SCALE MRNA]</scope>
    <source>
        <strain>Berkeley</strain>
    </source>
</reference>
<reference key="4">
    <citation type="journal article" date="2007" name="Curr. Biol.">
        <title>Cutoff and aubergine mutations result in retrotransposon upregulation and checkpoint activation in Drosophila.</title>
        <authorList>
            <person name="Chen Y."/>
            <person name="Pane A."/>
            <person name="Schuepbach T."/>
        </authorList>
    </citation>
    <scope>FUNCTION</scope>
    <scope>SUBCELLULAR LOCATION</scope>
    <scope>DISRUPTION PHENOTYPE</scope>
</reference>
<reference key="5">
    <citation type="journal article" date="2011" name="EMBO J.">
        <title>The Cutoff protein regulates piRNA cluster expression and piRNA production in the Drosophila germline.</title>
        <authorList>
            <person name="Pane A."/>
            <person name="Jiang P."/>
            <person name="Zhao D.Y."/>
            <person name="Singh M."/>
            <person name="Schuepbach T."/>
        </authorList>
    </citation>
    <scope>FUNCTION</scope>
    <scope>SUBCELLULAR LOCATION</scope>
    <scope>INTERACTION WITH RHI</scope>
</reference>
<reference key="6">
    <citation type="journal article" date="2014" name="Cell">
        <title>The rhino-deadlock-cutoff complex licenses noncanonical transcription of dual-strand piRNA clusters in Drosophila.</title>
        <authorList>
            <person name="Mohn F."/>
            <person name="Sienski G."/>
            <person name="Handler D."/>
            <person name="Brennecke J."/>
        </authorList>
    </citation>
    <scope>FUNCTION</scope>
    <scope>IDENTIFICATION IN THE RDC COMPLEX</scope>
    <scope>INTERACTION WITH RHI AND DEL</scope>
    <scope>SUBCELLULAR LOCATION</scope>
</reference>
<reference key="7">
    <citation type="journal article" date="2014" name="Genes Dev.">
        <title>Transgenerationally inherited piRNAs trigger piRNA biogenesis by changing the chromatin of piRNA clusters and inducing precursor processing.</title>
        <authorList>
            <person name="Le Thomas A."/>
            <person name="Stuwe E."/>
            <person name="Li S."/>
            <person name="Du J."/>
            <person name="Marinov G."/>
            <person name="Rozhkov N."/>
            <person name="Chen Y.C."/>
            <person name="Luo Y."/>
            <person name="Sachidanandam R."/>
            <person name="Toth K.F."/>
            <person name="Patel D."/>
            <person name="Aravin A.A."/>
        </authorList>
    </citation>
    <scope>FUNCTION</scope>
    <scope>INTERACTION WITH RHI</scope>
    <scope>SUBCELLULAR LOCATION</scope>
</reference>
<reference key="8">
    <citation type="journal article" date="2016" name="Mol. Cell">
        <title>Cutoff Suppresses RNA Polymerase II Termination to Ensure Expression of piRNA Precursors.</title>
        <authorList>
            <person name="Chen Y.A."/>
            <person name="Stuwe E."/>
            <person name="Luo Y."/>
            <person name="Ninova M."/>
            <person name="Le Thomas A."/>
            <person name="Rozhavskaya E."/>
            <person name="Li S."/>
            <person name="Vempati S."/>
            <person name="Laver J.D."/>
            <person name="Patel D.J."/>
            <person name="Smibert C.A."/>
            <person name="Lipshitz H.D."/>
            <person name="Toth K.F."/>
            <person name="Aravin A.A."/>
        </authorList>
    </citation>
    <scope>FUNCTION</scope>
    <scope>INTERACTION WITH RAT1</scope>
    <scope>SUBCELLULAR LOCATION</scope>
    <scope>DISRUPTION PHENOTYPE</scope>
</reference>
<sequence length="384" mass="44833">MNSNYTILNIRAHSWAEKDNLVFPTITKPVSNGWFAWSPIGQFEPNSQKVPYVVVPPSIKFPISLRYKDSPPKLEKKPNIFLDNMLQYIESSSYMYVMVRNNQQAQLNANIVCTSEVLELMMCAPYEKKTGWSLGVTRYRNTMYICRIDVEQPDPIDQDNLKRAMQEFWLRNLRTHCVFENGIKMHQHNQSSEEHLRFHGVFSFDLNGNRVLFDSPVLAEMPSTTLNGSALSWVDLQIRPMFMSRLDWPEHNRTEALKWWVKCFLLGIESLYIARRDENAHVHNIEKTLVRDLWKSCEKDWSPTVCANFMIYLLNCISQVMAPIDCPSTVYLFQFDASQGTVSYKGLRGRNQYTFVSDWFRMMLDDHTNDMCKTPNLQTMSSIV</sequence>
<keyword id="KW-0158">Chromosome</keyword>
<keyword id="KW-0963">Cytoplasm</keyword>
<keyword id="KW-0539">Nucleus</keyword>
<keyword id="KW-1185">Reference proteome</keyword>
<organism>
    <name type="scientific">Drosophila melanogaster</name>
    <name type="common">Fruit fly</name>
    <dbReference type="NCBI Taxonomy" id="7227"/>
    <lineage>
        <taxon>Eukaryota</taxon>
        <taxon>Metazoa</taxon>
        <taxon>Ecdysozoa</taxon>
        <taxon>Arthropoda</taxon>
        <taxon>Hexapoda</taxon>
        <taxon>Insecta</taxon>
        <taxon>Pterygota</taxon>
        <taxon>Neoptera</taxon>
        <taxon>Endopterygota</taxon>
        <taxon>Diptera</taxon>
        <taxon>Brachycera</taxon>
        <taxon>Muscomorpha</taxon>
        <taxon>Ephydroidea</taxon>
        <taxon>Drosophilidae</taxon>
        <taxon>Drosophila</taxon>
        <taxon>Sophophora</taxon>
    </lineage>
</organism>